<keyword id="KW-0968">Cytoplasmic vesicle</keyword>
<keyword id="KW-0325">Glycoprotein</keyword>
<keyword id="KW-0472">Membrane</keyword>
<keyword id="KW-0532">Neurotransmitter transport</keyword>
<keyword id="KW-1185">Reference proteome</keyword>
<keyword id="KW-0812">Transmembrane</keyword>
<keyword id="KW-1133">Transmembrane helix</keyword>
<keyword id="KW-0813">Transport</keyword>
<reference key="1">
    <citation type="journal article" date="1997" name="Nature">
        <title>Identification and characterization of the vesicular GABA transporter.</title>
        <authorList>
            <person name="McIntire S.L."/>
            <person name="Reimer R.J."/>
            <person name="Schuske K."/>
            <person name="Edwards R.H."/>
            <person name="Jorgensen E.M."/>
        </authorList>
    </citation>
    <scope>NUCLEOTIDE SEQUENCE [MRNA]</scope>
    <scope>FUNCTION</scope>
    <scope>SUBCELLULAR LOCATION</scope>
    <scope>MUTAGENESIS OF GLY-462</scope>
</reference>
<reference key="2">
    <citation type="journal article" date="1998" name="Science">
        <title>Genome sequence of the nematode C. elegans: a platform for investigating biology.</title>
        <authorList>
            <consortium name="The C. elegans sequencing consortium"/>
        </authorList>
    </citation>
    <scope>NUCLEOTIDE SEQUENCE [LARGE SCALE GENOMIC DNA]</scope>
    <source>
        <strain>Bristol N2</strain>
    </source>
</reference>
<feature type="chain" id="PRO_0000093824" description="Vesicular GABA transporter">
    <location>
        <begin position="1"/>
        <end position="486"/>
    </location>
</feature>
<feature type="topological domain" description="Cytoplasmic" evidence="1">
    <location>
        <begin position="1"/>
        <end position="93"/>
    </location>
</feature>
<feature type="transmembrane region" description="Helical" evidence="1">
    <location>
        <begin position="94"/>
        <end position="114"/>
    </location>
</feature>
<feature type="topological domain" description="Lumenal, vesicle" evidence="1">
    <location>
        <begin position="115"/>
        <end position="119"/>
    </location>
</feature>
<feature type="transmembrane region" description="Helical" evidence="1">
    <location>
        <begin position="120"/>
        <end position="140"/>
    </location>
</feature>
<feature type="topological domain" description="Cytoplasmic" evidence="1">
    <location>
        <begin position="141"/>
        <end position="167"/>
    </location>
</feature>
<feature type="transmembrane region" description="Helical" evidence="1">
    <location>
        <begin position="168"/>
        <end position="188"/>
    </location>
</feature>
<feature type="topological domain" description="Lumenal, vesicle" evidence="1">
    <location>
        <begin position="189"/>
        <end position="203"/>
    </location>
</feature>
<feature type="transmembrane region" description="Helical" evidence="1">
    <location>
        <begin position="204"/>
        <end position="224"/>
    </location>
</feature>
<feature type="topological domain" description="Cytoplasmic" evidence="1">
    <location>
        <begin position="225"/>
        <end position="228"/>
    </location>
</feature>
<feature type="transmembrane region" description="Helical" evidence="1">
    <location>
        <begin position="229"/>
        <end position="249"/>
    </location>
</feature>
<feature type="topological domain" description="Lumenal, vesicle" evidence="1">
    <location>
        <begin position="250"/>
        <end position="263"/>
    </location>
</feature>
<feature type="transmembrane region" description="Helical" evidence="1">
    <location>
        <begin position="264"/>
        <end position="284"/>
    </location>
</feature>
<feature type="topological domain" description="Cytoplasmic" evidence="1">
    <location>
        <begin position="285"/>
        <end position="305"/>
    </location>
</feature>
<feature type="transmembrane region" description="Helical" evidence="1">
    <location>
        <begin position="306"/>
        <end position="326"/>
    </location>
</feature>
<feature type="topological domain" description="Lumenal, vesicle" evidence="1">
    <location>
        <begin position="327"/>
        <end position="341"/>
    </location>
</feature>
<feature type="transmembrane region" description="Helical" evidence="1">
    <location>
        <begin position="342"/>
        <end position="362"/>
    </location>
</feature>
<feature type="topological domain" description="Cytoplasmic" evidence="1">
    <location>
        <begin position="363"/>
        <end position="398"/>
    </location>
</feature>
<feature type="transmembrane region" description="Helical" evidence="1">
    <location>
        <begin position="399"/>
        <end position="419"/>
    </location>
</feature>
<feature type="topological domain" description="Lumenal, vesicle" evidence="1">
    <location>
        <begin position="420"/>
        <end position="421"/>
    </location>
</feature>
<feature type="transmembrane region" description="Helical" evidence="1">
    <location>
        <begin position="422"/>
        <end position="442"/>
    </location>
</feature>
<feature type="topological domain" description="Cytoplasmic" evidence="1">
    <location>
        <begin position="443"/>
        <end position="457"/>
    </location>
</feature>
<feature type="transmembrane region" description="Helical" evidence="1">
    <location>
        <begin position="458"/>
        <end position="478"/>
    </location>
</feature>
<feature type="topological domain" description="Lumenal, vesicle" evidence="1">
    <location>
        <begin position="479"/>
        <end position="486"/>
    </location>
</feature>
<feature type="region of interest" description="Disordered" evidence="2">
    <location>
        <begin position="29"/>
        <end position="85"/>
    </location>
</feature>
<feature type="compositionally biased region" description="Polar residues" evidence="2">
    <location>
        <begin position="29"/>
        <end position="46"/>
    </location>
</feature>
<feature type="compositionally biased region" description="Basic and acidic residues" evidence="2">
    <location>
        <begin position="66"/>
        <end position="85"/>
    </location>
</feature>
<feature type="glycosylation site" description="N-linked (GlcNAc...) asparagine" evidence="1">
    <location>
        <position position="337"/>
    </location>
</feature>
<feature type="mutagenesis site" description="In N2409; loss of GABA transport into synaptic vesicles." evidence="3">
    <original>G</original>
    <variation>R</variation>
    <location>
        <position position="462"/>
    </location>
</feature>
<dbReference type="EMBL" id="AF031935">
    <property type="protein sequence ID" value="AAB87066.1"/>
    <property type="molecule type" value="mRNA"/>
</dbReference>
<dbReference type="EMBL" id="Z30423">
    <property type="protein sequence ID" value="CAA83006.2"/>
    <property type="molecule type" value="Genomic_DNA"/>
</dbReference>
<dbReference type="PIR" id="S42372">
    <property type="entry name" value="S42372"/>
</dbReference>
<dbReference type="PIR" id="T42254">
    <property type="entry name" value="T42254"/>
</dbReference>
<dbReference type="RefSeq" id="NP_499255.1">
    <property type="nucleotide sequence ID" value="NM_066854.7"/>
</dbReference>
<dbReference type="SMR" id="P34579"/>
<dbReference type="FunCoup" id="P34579">
    <property type="interactions" value="122"/>
</dbReference>
<dbReference type="STRING" id="6239.T20G5.6.2"/>
<dbReference type="TCDB" id="2.A.18.5.1">
    <property type="family name" value="the amino acid/auxin permease (aaap) family"/>
</dbReference>
<dbReference type="GlyCosmos" id="P34579">
    <property type="glycosylation" value="1 site, No reported glycans"/>
</dbReference>
<dbReference type="PaxDb" id="6239-T20G5.6.1"/>
<dbReference type="EnsemblMetazoa" id="T20G5.6.1">
    <property type="protein sequence ID" value="T20G5.6.1"/>
    <property type="gene ID" value="WBGene00006783"/>
</dbReference>
<dbReference type="GeneID" id="176431"/>
<dbReference type="KEGG" id="cel:CELE_T20G5.6"/>
<dbReference type="UCSC" id="T20G5.6.2">
    <property type="organism name" value="c. elegans"/>
</dbReference>
<dbReference type="AGR" id="WB:WBGene00006783"/>
<dbReference type="CTD" id="176431"/>
<dbReference type="WormBase" id="T20G5.6">
    <property type="protein sequence ID" value="CE25119"/>
    <property type="gene ID" value="WBGene00006783"/>
    <property type="gene designation" value="unc-47"/>
</dbReference>
<dbReference type="eggNOG" id="KOG4303">
    <property type="taxonomic scope" value="Eukaryota"/>
</dbReference>
<dbReference type="GeneTree" id="ENSGT00940000168583"/>
<dbReference type="HOGENOM" id="CLU_036432_0_0_1"/>
<dbReference type="InParanoid" id="P34579"/>
<dbReference type="OMA" id="MKWTHIA"/>
<dbReference type="OrthoDB" id="6021076at2759"/>
<dbReference type="PhylomeDB" id="P34579"/>
<dbReference type="Reactome" id="R-CEL-425393">
    <property type="pathway name" value="Transport of inorganic cations/anions and amino acids/oligopeptides"/>
</dbReference>
<dbReference type="Reactome" id="R-CEL-888590">
    <property type="pathway name" value="GABA synthesis, release, reuptake and degradation"/>
</dbReference>
<dbReference type="PRO" id="PR:P34579"/>
<dbReference type="Proteomes" id="UP000001940">
    <property type="component" value="Chromosome III"/>
</dbReference>
<dbReference type="Bgee" id="WBGene00006783">
    <property type="expression patterns" value="Expressed in larva and 3 other cell types or tissues"/>
</dbReference>
<dbReference type="GO" id="GO:0044292">
    <property type="term" value="C:dendrite terminus"/>
    <property type="evidence" value="ECO:0000318"/>
    <property type="project" value="GO_Central"/>
</dbReference>
<dbReference type="GO" id="GO:0044306">
    <property type="term" value="C:neuron projection terminus"/>
    <property type="evidence" value="ECO:0000318"/>
    <property type="project" value="GO_Central"/>
</dbReference>
<dbReference type="GO" id="GO:0008021">
    <property type="term" value="C:synaptic vesicle"/>
    <property type="evidence" value="ECO:0000314"/>
    <property type="project" value="WormBase"/>
</dbReference>
<dbReference type="GO" id="GO:0030672">
    <property type="term" value="C:synaptic vesicle membrane"/>
    <property type="evidence" value="ECO:0000318"/>
    <property type="project" value="GO_Central"/>
</dbReference>
<dbReference type="GO" id="GO:0015187">
    <property type="term" value="F:glycine transmembrane transporter activity"/>
    <property type="evidence" value="ECO:0000318"/>
    <property type="project" value="GO_Central"/>
</dbReference>
<dbReference type="GO" id="GO:0015812">
    <property type="term" value="P:gamma-aminobutyric acid transport"/>
    <property type="evidence" value="ECO:0000318"/>
    <property type="project" value="GO_Central"/>
</dbReference>
<dbReference type="GO" id="GO:0015816">
    <property type="term" value="P:glycine transport"/>
    <property type="evidence" value="ECO:0000318"/>
    <property type="project" value="GO_Central"/>
</dbReference>
<dbReference type="GO" id="GO:0098700">
    <property type="term" value="P:neurotransmitter loading into synaptic vesicle"/>
    <property type="evidence" value="ECO:0000318"/>
    <property type="project" value="GO_Central"/>
</dbReference>
<dbReference type="InterPro" id="IPR013057">
    <property type="entry name" value="AA_transpt_TM"/>
</dbReference>
<dbReference type="PANTHER" id="PTHR22950">
    <property type="entry name" value="AMINO ACID TRANSPORTER"/>
    <property type="match status" value="1"/>
</dbReference>
<dbReference type="PANTHER" id="PTHR22950:SF689">
    <property type="entry name" value="VESICULAR INHIBITORY AMINO ACID TRANSPORTER"/>
    <property type="match status" value="1"/>
</dbReference>
<dbReference type="Pfam" id="PF01490">
    <property type="entry name" value="Aa_trans"/>
    <property type="match status" value="1"/>
</dbReference>
<accession>P34579</accession>
<accession>O17475</accession>
<protein>
    <recommendedName>
        <fullName>Vesicular GABA transporter</fullName>
    </recommendedName>
    <alternativeName>
        <fullName>Uncoordinated protein 47</fullName>
        <shortName>Protein unc-47</shortName>
    </alternativeName>
</protein>
<name>UNC47_CAEEL</name>
<comment type="function">
    <text evidence="3">Involved in the uptake of GABA into the synaptic vesicles.</text>
</comment>
<comment type="subcellular location">
    <subcellularLocation>
        <location evidence="3">Cytoplasmic vesicle membrane</location>
        <topology evidence="3">Multi-pass membrane protein</topology>
    </subcellularLocation>
</comment>
<comment type="similarity">
    <text evidence="4">Belongs to the amino acid/polyamine transporter 2 family.</text>
</comment>
<sequence>MASNRFQNLQNWTNKHVFSNSLDYWNQELNEVPSYQNQPQTGESGSNPPPHDRLEPIQESVVSEQPQKDDINKQEEAKDDGHGEASEPISALQAAWNVTNAIQGMFIVGLPIAVKVGGWWSIGAMVGVAYVCYWTGVLLIECLYENGVKKRKTYREIADFYKPGFGKWVLAAQLTELLSTCIIYLVLAADLLQSCFPSVDKAGWMMITSASLLTCSFLDDLQIVSRLSFFNAISHLIVNLIMVLYCLSFVSQWSFSTITFSLNINTLPTIVGMVVFGYTSHIFLPNLEGNMKNPAQFNVMLKWSHIAAAVFKVVFGMLGFLTFGELTQEEISNSLPNQSFKILVNLILVVKALLSYPLPFYAAVQLLKNNLFLGYPQTPFTSCYSPDKSLREWAVTLRIILVLFTLFVALSVPYLVELMGLVGNITGTMLSFIWPALFHLYIKEKTLNNFEKRFDQGIIIMGCSVCISGVYFSSMELLRAINSADS</sequence>
<gene>
    <name type="primary">unc-47</name>
    <name type="ORF">T20G5.6</name>
</gene>
<proteinExistence type="evidence at protein level"/>
<organism>
    <name type="scientific">Caenorhabditis elegans</name>
    <dbReference type="NCBI Taxonomy" id="6239"/>
    <lineage>
        <taxon>Eukaryota</taxon>
        <taxon>Metazoa</taxon>
        <taxon>Ecdysozoa</taxon>
        <taxon>Nematoda</taxon>
        <taxon>Chromadorea</taxon>
        <taxon>Rhabditida</taxon>
        <taxon>Rhabditina</taxon>
        <taxon>Rhabditomorpha</taxon>
        <taxon>Rhabditoidea</taxon>
        <taxon>Rhabditidae</taxon>
        <taxon>Peloderinae</taxon>
        <taxon>Caenorhabditis</taxon>
    </lineage>
</organism>
<evidence type="ECO:0000255" key="1"/>
<evidence type="ECO:0000256" key="2">
    <source>
        <dbReference type="SAM" id="MobiDB-lite"/>
    </source>
</evidence>
<evidence type="ECO:0000269" key="3">
    <source>
    </source>
</evidence>
<evidence type="ECO:0000305" key="4"/>